<protein>
    <recommendedName>
        <fullName evidence="1">Deoxyuridine 5'-triphosphate nucleotidohydrolase</fullName>
        <shortName evidence="1">dUTPase</shortName>
        <ecNumber evidence="1">3.6.1.23</ecNumber>
    </recommendedName>
    <alternativeName>
        <fullName evidence="1">dUTP pyrophosphatase</fullName>
    </alternativeName>
</protein>
<comment type="function">
    <text evidence="1">This enzyme is involved in nucleotide metabolism: it produces dUMP, the immediate precursor of thymidine nucleotides and it decreases the intracellular concentration of dUTP so that uracil cannot be incorporated into DNA.</text>
</comment>
<comment type="catalytic activity">
    <reaction evidence="1">
        <text>dUTP + H2O = dUMP + diphosphate + H(+)</text>
        <dbReference type="Rhea" id="RHEA:10248"/>
        <dbReference type="ChEBI" id="CHEBI:15377"/>
        <dbReference type="ChEBI" id="CHEBI:15378"/>
        <dbReference type="ChEBI" id="CHEBI:33019"/>
        <dbReference type="ChEBI" id="CHEBI:61555"/>
        <dbReference type="ChEBI" id="CHEBI:246422"/>
        <dbReference type="EC" id="3.6.1.23"/>
    </reaction>
</comment>
<comment type="cofactor">
    <cofactor evidence="1">
        <name>Mg(2+)</name>
        <dbReference type="ChEBI" id="CHEBI:18420"/>
    </cofactor>
</comment>
<comment type="pathway">
    <text evidence="1">Pyrimidine metabolism; dUMP biosynthesis; dUMP from dCTP (dUTP route): step 2/2.</text>
</comment>
<comment type="similarity">
    <text evidence="1">Belongs to the dUTPase family.</text>
</comment>
<feature type="chain" id="PRO_1000015439" description="Deoxyuridine 5'-triphosphate nucleotidohydrolase">
    <location>
        <begin position="1"/>
        <end position="152"/>
    </location>
</feature>
<feature type="binding site" evidence="1">
    <location>
        <begin position="71"/>
        <end position="73"/>
    </location>
    <ligand>
        <name>substrate</name>
    </ligand>
</feature>
<feature type="binding site" evidence="1">
    <location>
        <position position="84"/>
    </location>
    <ligand>
        <name>substrate</name>
    </ligand>
</feature>
<feature type="binding site" evidence="1">
    <location>
        <begin position="88"/>
        <end position="90"/>
    </location>
    <ligand>
        <name>substrate</name>
    </ligand>
</feature>
<feature type="binding site" evidence="1">
    <location>
        <position position="98"/>
    </location>
    <ligand>
        <name>substrate</name>
    </ligand>
</feature>
<proteinExistence type="inferred from homology"/>
<reference key="1">
    <citation type="journal article" date="2008" name="BMC Genomics">
        <title>The genome of Aeromonas salmonicida subsp. salmonicida A449: insights into the evolution of a fish pathogen.</title>
        <authorList>
            <person name="Reith M.E."/>
            <person name="Singh R.K."/>
            <person name="Curtis B."/>
            <person name="Boyd J.M."/>
            <person name="Bouevitch A."/>
            <person name="Kimball J."/>
            <person name="Munholland J."/>
            <person name="Murphy C."/>
            <person name="Sarty D."/>
            <person name="Williams J."/>
            <person name="Nash J.H."/>
            <person name="Johnson S.C."/>
            <person name="Brown L.L."/>
        </authorList>
    </citation>
    <scope>NUCLEOTIDE SEQUENCE [LARGE SCALE GENOMIC DNA]</scope>
    <source>
        <strain>A449</strain>
    </source>
</reference>
<evidence type="ECO:0000255" key="1">
    <source>
        <dbReference type="HAMAP-Rule" id="MF_00116"/>
    </source>
</evidence>
<name>DUT_AERS4</name>
<accession>A4STD7</accession>
<gene>
    <name evidence="1" type="primary">dut</name>
    <name type="ordered locus">ASA_4231</name>
</gene>
<organism>
    <name type="scientific">Aeromonas salmonicida (strain A449)</name>
    <dbReference type="NCBI Taxonomy" id="382245"/>
    <lineage>
        <taxon>Bacteria</taxon>
        <taxon>Pseudomonadati</taxon>
        <taxon>Pseudomonadota</taxon>
        <taxon>Gammaproteobacteria</taxon>
        <taxon>Aeromonadales</taxon>
        <taxon>Aeromonadaceae</taxon>
        <taxon>Aeromonas</taxon>
    </lineage>
</organism>
<dbReference type="EC" id="3.6.1.23" evidence="1"/>
<dbReference type="EMBL" id="CP000644">
    <property type="protein sequence ID" value="ABO92159.1"/>
    <property type="molecule type" value="Genomic_DNA"/>
</dbReference>
<dbReference type="RefSeq" id="WP_005321291.1">
    <property type="nucleotide sequence ID" value="NC_009348.1"/>
</dbReference>
<dbReference type="SMR" id="A4STD7"/>
<dbReference type="STRING" id="29491.GCA_000820065_04490"/>
<dbReference type="GeneID" id="79877617"/>
<dbReference type="KEGG" id="asa:ASA_4231"/>
<dbReference type="eggNOG" id="COG0756">
    <property type="taxonomic scope" value="Bacteria"/>
</dbReference>
<dbReference type="HOGENOM" id="CLU_068508_1_1_6"/>
<dbReference type="UniPathway" id="UPA00610">
    <property type="reaction ID" value="UER00666"/>
</dbReference>
<dbReference type="Proteomes" id="UP000000225">
    <property type="component" value="Chromosome"/>
</dbReference>
<dbReference type="GO" id="GO:0004170">
    <property type="term" value="F:dUTP diphosphatase activity"/>
    <property type="evidence" value="ECO:0007669"/>
    <property type="project" value="UniProtKB-UniRule"/>
</dbReference>
<dbReference type="GO" id="GO:0000287">
    <property type="term" value="F:magnesium ion binding"/>
    <property type="evidence" value="ECO:0007669"/>
    <property type="project" value="UniProtKB-UniRule"/>
</dbReference>
<dbReference type="GO" id="GO:0006226">
    <property type="term" value="P:dUMP biosynthetic process"/>
    <property type="evidence" value="ECO:0007669"/>
    <property type="project" value="UniProtKB-UniRule"/>
</dbReference>
<dbReference type="GO" id="GO:0046081">
    <property type="term" value="P:dUTP catabolic process"/>
    <property type="evidence" value="ECO:0007669"/>
    <property type="project" value="InterPro"/>
</dbReference>
<dbReference type="CDD" id="cd07557">
    <property type="entry name" value="trimeric_dUTPase"/>
    <property type="match status" value="1"/>
</dbReference>
<dbReference type="FunFam" id="2.70.40.10:FF:000002">
    <property type="entry name" value="dUTP diphosphatase"/>
    <property type="match status" value="1"/>
</dbReference>
<dbReference type="Gene3D" id="2.70.40.10">
    <property type="match status" value="1"/>
</dbReference>
<dbReference type="HAMAP" id="MF_00116">
    <property type="entry name" value="dUTPase_bact"/>
    <property type="match status" value="1"/>
</dbReference>
<dbReference type="InterPro" id="IPR008181">
    <property type="entry name" value="dUTPase"/>
</dbReference>
<dbReference type="InterPro" id="IPR029054">
    <property type="entry name" value="dUTPase-like"/>
</dbReference>
<dbReference type="InterPro" id="IPR036157">
    <property type="entry name" value="dUTPase-like_sf"/>
</dbReference>
<dbReference type="InterPro" id="IPR033704">
    <property type="entry name" value="dUTPase_trimeric"/>
</dbReference>
<dbReference type="NCBIfam" id="TIGR00576">
    <property type="entry name" value="dut"/>
    <property type="match status" value="1"/>
</dbReference>
<dbReference type="NCBIfam" id="NF001862">
    <property type="entry name" value="PRK00601.1"/>
    <property type="match status" value="1"/>
</dbReference>
<dbReference type="PANTHER" id="PTHR11241">
    <property type="entry name" value="DEOXYURIDINE 5'-TRIPHOSPHATE NUCLEOTIDOHYDROLASE"/>
    <property type="match status" value="1"/>
</dbReference>
<dbReference type="PANTHER" id="PTHR11241:SF0">
    <property type="entry name" value="DEOXYURIDINE 5'-TRIPHOSPHATE NUCLEOTIDOHYDROLASE"/>
    <property type="match status" value="1"/>
</dbReference>
<dbReference type="Pfam" id="PF00692">
    <property type="entry name" value="dUTPase"/>
    <property type="match status" value="1"/>
</dbReference>
<dbReference type="SUPFAM" id="SSF51283">
    <property type="entry name" value="dUTPase-like"/>
    <property type="match status" value="1"/>
</dbReference>
<keyword id="KW-0378">Hydrolase</keyword>
<keyword id="KW-0460">Magnesium</keyword>
<keyword id="KW-0479">Metal-binding</keyword>
<keyword id="KW-0546">Nucleotide metabolism</keyword>
<sequence>MTTQIELKILDARIGTEYPLPAYATPGSAGMDLRALLDAPITLAPGDTILVPTGLAIHIQDPGLCATILPRSGLGHKHGIVLGNLVGLIDSDYQGQLMVSVWNRGNDSFTMQPGERIAQLVIMPVVQASFQLVDEFNQSERGEGGFGSSGRQ</sequence>